<organism>
    <name type="scientific">Mycolicibacterium thermoresistibile (strain ATCC 19527 / DSM 44167 / CIP 105390 / JCM 6362 / NCTC 10409 / 316)</name>
    <name type="common">Mycobacterium thermoresistibile</name>
    <dbReference type="NCBI Taxonomy" id="1078020"/>
    <lineage>
        <taxon>Bacteria</taxon>
        <taxon>Bacillati</taxon>
        <taxon>Actinomycetota</taxon>
        <taxon>Actinomycetes</taxon>
        <taxon>Mycobacteriales</taxon>
        <taxon>Mycobacteriaceae</taxon>
        <taxon>Mycolicibacterium</taxon>
    </lineage>
</organism>
<evidence type="ECO:0000255" key="1">
    <source>
        <dbReference type="PROSITE-ProRule" id="PRU00434"/>
    </source>
</evidence>
<evidence type="ECO:0000255" key="2">
    <source>
        <dbReference type="PROSITE-ProRule" id="PRU00441"/>
    </source>
</evidence>
<evidence type="ECO:0000255" key="3">
    <source>
        <dbReference type="PROSITE-ProRule" id="PRU00716"/>
    </source>
</evidence>
<evidence type="ECO:0000256" key="4">
    <source>
        <dbReference type="SAM" id="MobiDB-lite"/>
    </source>
</evidence>
<evidence type="ECO:0000269" key="5">
    <source>
    </source>
</evidence>
<evidence type="ECO:0000303" key="6">
    <source>
    </source>
</evidence>
<evidence type="ECO:0000305" key="7"/>
<evidence type="ECO:0000305" key="8">
    <source>
    </source>
</evidence>
<evidence type="ECO:0000312" key="9">
    <source>
        <dbReference type="EMBL" id="EHI14680.1"/>
    </source>
</evidence>
<evidence type="ECO:0007829" key="10">
    <source>
        <dbReference type="PDB" id="9G2P"/>
    </source>
</evidence>
<evidence type="ECO:0007829" key="11">
    <source>
        <dbReference type="PDB" id="9G2S"/>
    </source>
</evidence>
<evidence type="ECO:0007829" key="12">
    <source>
        <dbReference type="PDB" id="9G2T"/>
    </source>
</evidence>
<evidence type="ECO:0007829" key="13">
    <source>
        <dbReference type="PDB" id="9G2V"/>
    </source>
</evidence>
<evidence type="ECO:0007829" key="14">
    <source>
        <dbReference type="PDB" id="9G2Z"/>
    </source>
</evidence>
<accession>G7CBF5</accession>
<feature type="chain" id="PRO_0000450627" description="Mycobactin import ATP-binding/permease protein IrtA">
    <location>
        <begin position="1"/>
        <end position="908"/>
    </location>
</feature>
<feature type="topological domain" description="Cytoplasmic" evidence="8">
    <location>
        <begin position="1"/>
        <end position="329"/>
    </location>
</feature>
<feature type="transmembrane region" description="Helical" evidence="2">
    <location>
        <begin position="330"/>
        <end position="350"/>
    </location>
</feature>
<feature type="topological domain" description="Periplasmic" evidence="8">
    <location>
        <begin position="351"/>
        <end position="371"/>
    </location>
</feature>
<feature type="transmembrane region" description="Helical" evidence="2">
    <location>
        <begin position="372"/>
        <end position="392"/>
    </location>
</feature>
<feature type="topological domain" description="Cytoplasmic" evidence="8">
    <location>
        <begin position="393"/>
        <end position="444"/>
    </location>
</feature>
<feature type="transmembrane region" description="Helical" evidence="2">
    <location>
        <begin position="445"/>
        <end position="465"/>
    </location>
</feature>
<feature type="topological domain" description="Periplasmic" evidence="8">
    <location>
        <begin position="466"/>
        <end position="469"/>
    </location>
</feature>
<feature type="transmembrane region" description="Helical" evidence="2">
    <location>
        <begin position="470"/>
        <end position="490"/>
    </location>
</feature>
<feature type="topological domain" description="Cytoplasmic" evidence="8">
    <location>
        <begin position="491"/>
        <end position="557"/>
    </location>
</feature>
<feature type="transmembrane region" description="Helical" evidence="2">
    <location>
        <begin position="558"/>
        <end position="578"/>
    </location>
</feature>
<feature type="topological domain" description="Periplasmic" evidence="8">
    <location>
        <begin position="579"/>
        <end position="586"/>
    </location>
</feature>
<feature type="transmembrane region" description="Helical" evidence="2">
    <location>
        <begin position="587"/>
        <end position="607"/>
    </location>
</feature>
<feature type="topological domain" description="Cytoplasmic" evidence="8">
    <location>
        <begin position="608"/>
        <end position="908"/>
    </location>
</feature>
<feature type="domain" description="FAD-binding FR-type" evidence="3">
    <location>
        <begin position="15"/>
        <end position="124"/>
    </location>
</feature>
<feature type="domain" description="ABC transmembrane type-1" evidence="2">
    <location>
        <begin position="331"/>
        <end position="613"/>
    </location>
</feature>
<feature type="domain" description="ABC transporter" evidence="1">
    <location>
        <begin position="654"/>
        <end position="887"/>
    </location>
</feature>
<feature type="region of interest" description="Siderophore interaction domain" evidence="7">
    <location>
        <begin position="16"/>
        <end position="245"/>
    </location>
</feature>
<feature type="region of interest" description="Disordered" evidence="4">
    <location>
        <begin position="245"/>
        <end position="311"/>
    </location>
</feature>
<feature type="compositionally biased region" description="Low complexity" evidence="4">
    <location>
        <begin position="253"/>
        <end position="309"/>
    </location>
</feature>
<feature type="binding site" evidence="5">
    <location>
        <begin position="70"/>
        <end position="73"/>
    </location>
    <ligand>
        <name>FAD</name>
        <dbReference type="ChEBI" id="CHEBI:57692"/>
    </ligand>
</feature>
<feature type="binding site" evidence="5">
    <location>
        <begin position="87"/>
        <end position="91"/>
    </location>
    <ligand>
        <name>FAD</name>
        <dbReference type="ChEBI" id="CHEBI:57692"/>
    </ligand>
</feature>
<feature type="binding site" evidence="5">
    <location>
        <begin position="97"/>
        <end position="98"/>
    </location>
    <ligand>
        <name>FAD</name>
        <dbReference type="ChEBI" id="CHEBI:57692"/>
    </ligand>
</feature>
<feature type="binding site" evidence="5">
    <location>
        <begin position="241"/>
        <end position="243"/>
    </location>
    <ligand>
        <name>FAD</name>
        <dbReference type="ChEBI" id="CHEBI:57692"/>
    </ligand>
</feature>
<feature type="binding site" evidence="1">
    <location>
        <begin position="687"/>
        <end position="694"/>
    </location>
    <ligand>
        <name>ATP</name>
        <dbReference type="ChEBI" id="CHEBI:30616"/>
    </ligand>
</feature>
<feature type="helix" evidence="10">
    <location>
        <begin position="319"/>
        <end position="322"/>
    </location>
</feature>
<feature type="helix" evidence="10">
    <location>
        <begin position="324"/>
        <end position="326"/>
    </location>
</feature>
<feature type="helix" evidence="10">
    <location>
        <begin position="327"/>
        <end position="359"/>
    </location>
</feature>
<feature type="helix" evidence="10">
    <location>
        <begin position="364"/>
        <end position="411"/>
    </location>
</feature>
<feature type="helix" evidence="10">
    <location>
        <begin position="416"/>
        <end position="422"/>
    </location>
</feature>
<feature type="helix" evidence="10">
    <location>
        <begin position="424"/>
        <end position="436"/>
    </location>
</feature>
<feature type="helix" evidence="10">
    <location>
        <begin position="439"/>
        <end position="443"/>
    </location>
</feature>
<feature type="helix" evidence="10">
    <location>
        <begin position="445"/>
        <end position="466"/>
    </location>
</feature>
<feature type="helix" evidence="10">
    <location>
        <begin position="468"/>
        <end position="473"/>
    </location>
</feature>
<feature type="helix" evidence="10">
    <location>
        <begin position="475"/>
        <end position="515"/>
    </location>
</feature>
<feature type="helix" evidence="10">
    <location>
        <begin position="517"/>
        <end position="522"/>
    </location>
</feature>
<feature type="turn" evidence="10">
    <location>
        <begin position="523"/>
        <end position="528"/>
    </location>
</feature>
<feature type="helix" evidence="10">
    <location>
        <begin position="530"/>
        <end position="559"/>
    </location>
</feature>
<feature type="helix" evidence="10">
    <location>
        <begin position="562"/>
        <end position="577"/>
    </location>
</feature>
<feature type="helix" evidence="10">
    <location>
        <begin position="578"/>
        <end position="580"/>
    </location>
</feature>
<feature type="helix" evidence="10">
    <location>
        <begin position="584"/>
        <end position="587"/>
    </location>
</feature>
<feature type="helix" evidence="10">
    <location>
        <begin position="588"/>
        <end position="593"/>
    </location>
</feature>
<feature type="turn" evidence="10">
    <location>
        <begin position="594"/>
        <end position="596"/>
    </location>
</feature>
<feature type="helix" evidence="10">
    <location>
        <begin position="598"/>
        <end position="625"/>
    </location>
</feature>
<feature type="strand" evidence="10">
    <location>
        <begin position="654"/>
        <end position="664"/>
    </location>
</feature>
<feature type="strand" evidence="10">
    <location>
        <begin position="667"/>
        <end position="677"/>
    </location>
</feature>
<feature type="strand" evidence="10">
    <location>
        <begin position="682"/>
        <end position="686"/>
    </location>
</feature>
<feature type="strand" evidence="13">
    <location>
        <begin position="688"/>
        <end position="692"/>
    </location>
</feature>
<feature type="helix" evidence="10">
    <location>
        <begin position="693"/>
        <end position="700"/>
    </location>
</feature>
<feature type="strand" evidence="10">
    <location>
        <begin position="707"/>
        <end position="713"/>
    </location>
</feature>
<feature type="turn" evidence="10">
    <location>
        <begin position="718"/>
        <end position="720"/>
    </location>
</feature>
<feature type="helix" evidence="10">
    <location>
        <begin position="723"/>
        <end position="729"/>
    </location>
</feature>
<feature type="strand" evidence="10">
    <location>
        <begin position="730"/>
        <end position="733"/>
    </location>
</feature>
<feature type="strand" evidence="10">
    <location>
        <begin position="741"/>
        <end position="743"/>
    </location>
</feature>
<feature type="helix" evidence="10">
    <location>
        <begin position="744"/>
        <end position="748"/>
    </location>
</feature>
<feature type="helix" evidence="10">
    <location>
        <begin position="757"/>
        <end position="766"/>
    </location>
</feature>
<feature type="helix" evidence="10">
    <location>
        <begin position="770"/>
        <end position="775"/>
    </location>
</feature>
<feature type="strand" evidence="10">
    <location>
        <begin position="776"/>
        <end position="778"/>
    </location>
</feature>
<feature type="helix" evidence="10">
    <location>
        <begin position="779"/>
        <end position="781"/>
    </location>
</feature>
<feature type="strand" evidence="11">
    <location>
        <begin position="786"/>
        <end position="788"/>
    </location>
</feature>
<feature type="helix" evidence="10">
    <location>
        <begin position="792"/>
        <end position="806"/>
    </location>
</feature>
<feature type="strand" evidence="10">
    <location>
        <begin position="809"/>
        <end position="815"/>
    </location>
</feature>
<feature type="strand" evidence="14">
    <location>
        <begin position="818"/>
        <end position="820"/>
    </location>
</feature>
<feature type="helix" evidence="10">
    <location>
        <begin position="822"/>
        <end position="835"/>
    </location>
</feature>
<feature type="turn" evidence="10">
    <location>
        <begin position="836"/>
        <end position="838"/>
    </location>
</feature>
<feature type="strand" evidence="10">
    <location>
        <begin position="839"/>
        <end position="844"/>
    </location>
</feature>
<feature type="helix" evidence="10">
    <location>
        <begin position="848"/>
        <end position="850"/>
    </location>
</feature>
<feature type="turn" evidence="12">
    <location>
        <begin position="851"/>
        <end position="853"/>
    </location>
</feature>
<feature type="strand" evidence="10">
    <location>
        <begin position="855"/>
        <end position="861"/>
    </location>
</feature>
<feature type="strand" evidence="10">
    <location>
        <begin position="864"/>
        <end position="869"/>
    </location>
</feature>
<feature type="helix" evidence="10">
    <location>
        <begin position="871"/>
        <end position="877"/>
    </location>
</feature>
<feature type="helix" evidence="10">
    <location>
        <begin position="880"/>
        <end position="888"/>
    </location>
</feature>
<keyword id="KW-0002">3D-structure</keyword>
<keyword id="KW-0067">ATP-binding</keyword>
<keyword id="KW-0997">Cell inner membrane</keyword>
<keyword id="KW-1003">Cell membrane</keyword>
<keyword id="KW-0274">FAD</keyword>
<keyword id="KW-0285">Flavoprotein</keyword>
<keyword id="KW-0472">Membrane</keyword>
<keyword id="KW-0547">Nucleotide-binding</keyword>
<keyword id="KW-1185">Reference proteome</keyword>
<keyword id="KW-1278">Translocase</keyword>
<keyword id="KW-0812">Transmembrane</keyword>
<keyword id="KW-1133">Transmembrane helix</keyword>
<keyword id="KW-0813">Transport</keyword>
<reference key="1">
    <citation type="submission" date="2011-11" db="EMBL/GenBank/DDBJ databases">
        <authorList>
            <consortium name="Tuberculosis Structural Genomics Consortium"/>
            <person name="Ioerger T.R."/>
        </authorList>
    </citation>
    <scope>NUCLEOTIDE SEQUENCE [LARGE SCALE GENOMIC DNA]</scope>
    <source>
        <strain>ATCC 19527 / DSM 44167 / CIP 105390 / JCM 6362 / NCTC 10409 / 316</strain>
    </source>
</reference>
<reference key="2">
    <citation type="journal article" date="2020" name="Nature">
        <title>The ABC exporter IrtAB imports and reduces mycobacterial siderophores.</title>
        <authorList>
            <person name="Arnold F.M."/>
            <person name="Weber M.S."/>
            <person name="Gonda I."/>
            <person name="Gallenito M.J."/>
            <person name="Adenau S."/>
            <person name="Egloff P."/>
            <person name="Zimmermann I."/>
            <person name="Hutter C.A.J."/>
            <person name="Huerlimann L.M."/>
            <person name="Peters E.E."/>
            <person name="Piel J."/>
            <person name="Meloni G."/>
            <person name="Medalia O."/>
            <person name="Seeger M.A."/>
        </authorList>
    </citation>
    <scope>X-RAY CRYSTALLOGRAPHY (1.8 ANGSTROMS) OF THE SID DOMAIN IN COMPLEX WITH FAD AND OF THE IRTAB COMPLEX</scope>
    <scope>FUNCTION</scope>
    <scope>COFACTOR</scope>
    <scope>ACTIVITY REGULATION</scope>
    <scope>BIOPHYSICOCHEMICAL PROPERTIES</scope>
    <scope>SUBUNIT</scope>
    <scope>SUBCELLULAR LOCATION</scope>
    <scope>TOPOLOGY</scope>
    <scope>DOMAIN</scope>
</reference>
<sequence>MARGFQGVMLRGLGARDHQATVVDKEYIAPHFVRVRLVSPTLFDEVIVEPTSWLRFWFPDPDGSDTEFQRAYTITESDPETGRFAVDMVLHEPAGPASTWARTVEPGATIAVMSMGSRGFSVPEDPEDRPVGYLLIGDSASTPAINGIIEVVPHDIPIELYLEQHHDDDVLIPLAEHPRLRVHRVSRDDASSLAAALELRDWSNWYCWAGPEAGALKQVRTRLRDEFGFPKREVYAQAYWTEGRAMGSSRGETSTPAKPAAKTAPAKAAAKPAAASGAGTPEHAAAPAAATTGAPQAAPAPGAAQPRTPVRGRWRAEAGSRLLAPLKKPLIVSGVLQALITLIELAPFVLLVELARLLLGGAEAERLWTLGLTAVSLIGLGAVLAAAMTLWLHRVDARFAHELRGRLLTKLSRLPLGWFTRRGSASTKQLVQDDTLALHYLITHAIPDAVAAVVAPVAVLVYLFVADWRVALVLFIPVLVYLVLMSVMTIQSGSKIAQAPRWAERMGGEAGAFLEGQPVIRIFGGAAASRFRRRLDDYIDFLVSWQRPFVGKKTLMDLVTRPATFLWIILVAGVPLVVTGRMDPVNLLPFLLLGTTFGARLLGIGYGLSGIQTGMLAARRIQTVLDEPELVVRDRTGQAGTDHASGDQARPGTVELDRVSFEYRPGVPVIRDVTLTLRPGTVTALVGPSGSGKSTLAALVARFHDVTQGAIRVDGRDIRTLTADELYRRVGFVLQDAQLVHGSVAENIALAEPDAGLERIRTAARDAQIHDRITRMPDGYDSVLGAGSALSGGERQRVTIARAILADTPVLVLDEATAFADPESEYLVQQAINRLTRDRTVLVIAHRLHTITHADQIVVLDDGRIVEVGTHDELLAAGGRYRGLWDSGRYSSPDAGRPVSADAVEVGR</sequence>
<dbReference type="EC" id="7.2.2.-" evidence="5"/>
<dbReference type="EMBL" id="AGVE01000012">
    <property type="protein sequence ID" value="EHI14680.1"/>
    <property type="status" value="ALT_INIT"/>
    <property type="molecule type" value="Genomic_DNA"/>
</dbReference>
<dbReference type="RefSeq" id="WP_040545965.1">
    <property type="nucleotide sequence ID" value="NZ_AGVE01000012.1"/>
</dbReference>
<dbReference type="PDB" id="6TEJ">
    <property type="method" value="X-ray"/>
    <property type="resolution" value="2.70 A"/>
    <property type="chains" value="A=316-890"/>
</dbReference>
<dbReference type="PDB" id="6TEK">
    <property type="method" value="X-ray"/>
    <property type="resolution" value="1.80 A"/>
    <property type="chains" value="A/B=16-245"/>
</dbReference>
<dbReference type="PDB" id="9FW3">
    <property type="method" value="EM"/>
    <property type="resolution" value="2.67 A"/>
    <property type="chains" value="A=315-908"/>
</dbReference>
<dbReference type="PDB" id="9G2K">
    <property type="method" value="EM"/>
    <property type="resolution" value="3.14 A"/>
    <property type="chains" value="A=10-908"/>
</dbReference>
<dbReference type="PDB" id="9G2L">
    <property type="method" value="EM"/>
    <property type="resolution" value="3.23 A"/>
    <property type="chains" value="A=10-908"/>
</dbReference>
<dbReference type="PDB" id="9G2M">
    <property type="method" value="EM"/>
    <property type="resolution" value="3.23 A"/>
    <property type="chains" value="A=10-908"/>
</dbReference>
<dbReference type="PDB" id="9G2P">
    <property type="method" value="EM"/>
    <property type="resolution" value="2.50 A"/>
    <property type="chains" value="A=280-908"/>
</dbReference>
<dbReference type="PDB" id="9G2S">
    <property type="method" value="EM"/>
    <property type="resolution" value="2.90 A"/>
    <property type="chains" value="A=315-908"/>
</dbReference>
<dbReference type="PDB" id="9G2T">
    <property type="method" value="EM"/>
    <property type="resolution" value="3.15 A"/>
    <property type="chains" value="A=315-908"/>
</dbReference>
<dbReference type="PDB" id="9G2V">
    <property type="method" value="EM"/>
    <property type="resolution" value="3.35 A"/>
    <property type="chains" value="A=315-908"/>
</dbReference>
<dbReference type="PDB" id="9G2X">
    <property type="method" value="EM"/>
    <property type="resolution" value="2.85 A"/>
    <property type="chains" value="A=315-908"/>
</dbReference>
<dbReference type="PDB" id="9G2Y">
    <property type="method" value="EM"/>
    <property type="resolution" value="3.60 A"/>
    <property type="chains" value="A=315-908"/>
</dbReference>
<dbReference type="PDB" id="9G2Z">
    <property type="method" value="EM"/>
    <property type="resolution" value="2.78 A"/>
    <property type="chains" value="A=315-908"/>
</dbReference>
<dbReference type="PDB" id="9G36">
    <property type="method" value="EM"/>
    <property type="resolution" value="3.21 A"/>
    <property type="chains" value="A=315-908"/>
</dbReference>
<dbReference type="PDB" id="9G37">
    <property type="method" value="EM"/>
    <property type="resolution" value="3.00 A"/>
    <property type="chains" value="A=315-908"/>
</dbReference>
<dbReference type="PDB" id="9GL3">
    <property type="method" value="EM"/>
    <property type="resolution" value="3.20 A"/>
    <property type="chains" value="A=315-908"/>
</dbReference>
<dbReference type="PDBsum" id="6TEJ"/>
<dbReference type="PDBsum" id="6TEK"/>
<dbReference type="PDBsum" id="9FW3"/>
<dbReference type="PDBsum" id="9G2K"/>
<dbReference type="PDBsum" id="9G2L"/>
<dbReference type="PDBsum" id="9G2M"/>
<dbReference type="PDBsum" id="9G2P"/>
<dbReference type="PDBsum" id="9G2S"/>
<dbReference type="PDBsum" id="9G2T"/>
<dbReference type="PDBsum" id="9G2V"/>
<dbReference type="PDBsum" id="9G2X"/>
<dbReference type="PDBsum" id="9G2Y"/>
<dbReference type="PDBsum" id="9G2Z"/>
<dbReference type="PDBsum" id="9G36"/>
<dbReference type="PDBsum" id="9G37"/>
<dbReference type="PDBsum" id="9GL3"/>
<dbReference type="EMDB" id="EMD-50820"/>
<dbReference type="EMDB" id="EMD-50848"/>
<dbReference type="EMDB" id="EMD-50977"/>
<dbReference type="EMDB" id="EMD-50978"/>
<dbReference type="EMDB" id="EMD-50979"/>
<dbReference type="EMDB" id="EMD-50980"/>
<dbReference type="EMDB" id="EMD-50982"/>
<dbReference type="EMDB" id="EMD-50983"/>
<dbReference type="EMDB" id="EMD-50985"/>
<dbReference type="EMDB" id="EMD-50987"/>
<dbReference type="EMDB" id="EMD-50988"/>
<dbReference type="EMDB" id="EMD-50989"/>
<dbReference type="EMDB" id="EMD-50992"/>
<dbReference type="EMDB" id="EMD-50993"/>
<dbReference type="EMDB" id="EMD-51435"/>
<dbReference type="SMR" id="G7CBF5"/>
<dbReference type="PATRIC" id="fig|1078020.3.peg.287"/>
<dbReference type="eggNOG" id="COG1132">
    <property type="taxonomic scope" value="Bacteria"/>
</dbReference>
<dbReference type="eggNOG" id="COG2375">
    <property type="taxonomic scope" value="Bacteria"/>
</dbReference>
<dbReference type="SABIO-RK" id="G7CBF5"/>
<dbReference type="Proteomes" id="UP000004915">
    <property type="component" value="Unassembled WGS sequence"/>
</dbReference>
<dbReference type="GO" id="GO:0005886">
    <property type="term" value="C:plasma membrane"/>
    <property type="evidence" value="ECO:0007669"/>
    <property type="project" value="UniProtKB-SubCell"/>
</dbReference>
<dbReference type="GO" id="GO:0140359">
    <property type="term" value="F:ABC-type transporter activity"/>
    <property type="evidence" value="ECO:0007669"/>
    <property type="project" value="InterPro"/>
</dbReference>
<dbReference type="GO" id="GO:0005524">
    <property type="term" value="F:ATP binding"/>
    <property type="evidence" value="ECO:0007669"/>
    <property type="project" value="UniProtKB-KW"/>
</dbReference>
<dbReference type="GO" id="GO:0016887">
    <property type="term" value="F:ATP hydrolysis activity"/>
    <property type="evidence" value="ECO:0007669"/>
    <property type="project" value="InterPro"/>
</dbReference>
<dbReference type="GO" id="GO:0034040">
    <property type="term" value="F:ATPase-coupled lipid transmembrane transporter activity"/>
    <property type="evidence" value="ECO:0007669"/>
    <property type="project" value="TreeGrafter"/>
</dbReference>
<dbReference type="GO" id="GO:0016491">
    <property type="term" value="F:oxidoreductase activity"/>
    <property type="evidence" value="ECO:0007669"/>
    <property type="project" value="InterPro"/>
</dbReference>
<dbReference type="CDD" id="cd06193">
    <property type="entry name" value="siderophore_interacting"/>
    <property type="match status" value="1"/>
</dbReference>
<dbReference type="FunFam" id="3.40.50.300:FF:000221">
    <property type="entry name" value="Multidrug ABC transporter ATP-binding protein"/>
    <property type="match status" value="1"/>
</dbReference>
<dbReference type="Gene3D" id="1.20.1560.10">
    <property type="entry name" value="ABC transporter type 1, transmembrane domain"/>
    <property type="match status" value="1"/>
</dbReference>
<dbReference type="Gene3D" id="3.40.50.80">
    <property type="entry name" value="Nucleotide-binding domain of ferredoxin-NADP reductase (FNR) module"/>
    <property type="match status" value="1"/>
</dbReference>
<dbReference type="Gene3D" id="3.40.50.300">
    <property type="entry name" value="P-loop containing nucleotide triphosphate hydrolases"/>
    <property type="match status" value="1"/>
</dbReference>
<dbReference type="Gene3D" id="2.40.30.10">
    <property type="entry name" value="Translation factors"/>
    <property type="match status" value="1"/>
</dbReference>
<dbReference type="InterPro" id="IPR003593">
    <property type="entry name" value="AAA+_ATPase"/>
</dbReference>
<dbReference type="InterPro" id="IPR011527">
    <property type="entry name" value="ABC1_TM_dom"/>
</dbReference>
<dbReference type="InterPro" id="IPR036640">
    <property type="entry name" value="ABC1_TM_sf"/>
</dbReference>
<dbReference type="InterPro" id="IPR003439">
    <property type="entry name" value="ABC_transporter-like_ATP-bd"/>
</dbReference>
<dbReference type="InterPro" id="IPR017871">
    <property type="entry name" value="ABC_transporter-like_CS"/>
</dbReference>
<dbReference type="InterPro" id="IPR013113">
    <property type="entry name" value="FAD-bd_9_SIP"/>
</dbReference>
<dbReference type="InterPro" id="IPR017927">
    <property type="entry name" value="FAD-bd_FR_type"/>
</dbReference>
<dbReference type="InterPro" id="IPR039261">
    <property type="entry name" value="FNR_nucleotide-bd"/>
</dbReference>
<dbReference type="InterPro" id="IPR027417">
    <property type="entry name" value="P-loop_NTPase"/>
</dbReference>
<dbReference type="InterPro" id="IPR017938">
    <property type="entry name" value="Riboflavin_synthase-like_b-brl"/>
</dbReference>
<dbReference type="InterPro" id="IPR007037">
    <property type="entry name" value="SIP_C"/>
</dbReference>
<dbReference type="InterPro" id="IPR039421">
    <property type="entry name" value="Type_1_exporter"/>
</dbReference>
<dbReference type="PANTHER" id="PTHR24221">
    <property type="entry name" value="ATP-BINDING CASSETTE SUB-FAMILY B"/>
    <property type="match status" value="1"/>
</dbReference>
<dbReference type="PANTHER" id="PTHR24221:SF654">
    <property type="entry name" value="ATP-BINDING CASSETTE SUB-FAMILY B MEMBER 6"/>
    <property type="match status" value="1"/>
</dbReference>
<dbReference type="Pfam" id="PF00664">
    <property type="entry name" value="ABC_membrane"/>
    <property type="match status" value="1"/>
</dbReference>
<dbReference type="Pfam" id="PF00005">
    <property type="entry name" value="ABC_tran"/>
    <property type="match status" value="1"/>
</dbReference>
<dbReference type="Pfam" id="PF08021">
    <property type="entry name" value="FAD_binding_9"/>
    <property type="match status" value="1"/>
</dbReference>
<dbReference type="Pfam" id="PF04954">
    <property type="entry name" value="SIP"/>
    <property type="match status" value="1"/>
</dbReference>
<dbReference type="SMART" id="SM00382">
    <property type="entry name" value="AAA"/>
    <property type="match status" value="1"/>
</dbReference>
<dbReference type="SUPFAM" id="SSF90123">
    <property type="entry name" value="ABC transporter transmembrane region"/>
    <property type="match status" value="1"/>
</dbReference>
<dbReference type="SUPFAM" id="SSF52540">
    <property type="entry name" value="P-loop containing nucleoside triphosphate hydrolases"/>
    <property type="match status" value="1"/>
</dbReference>
<dbReference type="SUPFAM" id="SSF63380">
    <property type="entry name" value="Riboflavin synthase domain-like"/>
    <property type="match status" value="1"/>
</dbReference>
<dbReference type="PROSITE" id="PS50929">
    <property type="entry name" value="ABC_TM1F"/>
    <property type="match status" value="1"/>
</dbReference>
<dbReference type="PROSITE" id="PS00211">
    <property type="entry name" value="ABC_TRANSPORTER_1"/>
    <property type="match status" value="1"/>
</dbReference>
<dbReference type="PROSITE" id="PS50893">
    <property type="entry name" value="ABC_TRANSPORTER_2"/>
    <property type="match status" value="1"/>
</dbReference>
<dbReference type="PROSITE" id="PS51384">
    <property type="entry name" value="FAD_FR"/>
    <property type="match status" value="1"/>
</dbReference>
<protein>
    <recommendedName>
        <fullName evidence="7">Mycobactin import ATP-binding/permease protein IrtA</fullName>
        <ecNumber evidence="5">7.2.2.-</ecNumber>
    </recommendedName>
</protein>
<proteinExistence type="evidence at protein level"/>
<gene>
    <name evidence="6" type="primary">irtA</name>
    <name evidence="9" type="ORF">KEK_01485</name>
</gene>
<name>IRTA_MYCT3</name>
<comment type="function">
    <text evidence="5">Part of the ABC transporter complex IrtAB involved in the import of iron-bound mycobactin (Fe-MBT) and carboxymycobactin (Fe-cMBT) (PubMed:32296173). Has a preference for Fe-MBT over Fe-cMBT (PubMed:32296173). Mycobactins are then reduced by the siderophore interaction domain to facilitate iron release in the bacterial cell (PubMed:32296173). Transmembrane domains (TMD) form a pore in the membrane and the ATP-binding domain (NBD) is responsible for energy generation (PubMed:32296173).</text>
</comment>
<comment type="cofactor">
    <cofactor evidence="5">
        <name>FAD</name>
        <dbReference type="ChEBI" id="CHEBI:57692"/>
    </cofactor>
</comment>
<comment type="activity regulation">
    <text evidence="5">The ATPase activity of IrtAB is stimulated more than 38-fold in the presence of Fe-MBT, and more than 10-fold in the presence of Fe-cMBT.</text>
</comment>
<comment type="biophysicochemical properties">
    <kinetics>
        <KM evidence="5">185 uM for mycobactin</KM>
    </kinetics>
</comment>
<comment type="subunit">
    <text evidence="5">Forms a heterodimer with IrtB.</text>
</comment>
<comment type="subcellular location">
    <subcellularLocation>
        <location evidence="5">Cell inner membrane</location>
        <topology evidence="5">Multi-pass membrane protein</topology>
    </subcellularLocation>
</comment>
<comment type="domain">
    <text evidence="5">In IrtA the ATP-binding domain (NBD) and the transmembrane domain (TMD) are fused. In addition, IrtA contains an N-terminal siderophore interaction domain (SID) that binds FAD (PubMed:32296173). The IrtAB transporter assumes an inward-facing conformation, which may represent the low-affinity state after mycobactin release towards the SID and the cytoplasm (PubMed:32296173).</text>
</comment>
<comment type="miscellaneous">
    <text evidence="8">The import function of IrtAB is contradictory to structural predictions, which suggest that it has an ABC exporter fold.</text>
</comment>
<comment type="similarity">
    <text evidence="7">Belongs to the ABC transporter superfamily. Siderophore-Fe(3+) uptake transporter (SIUT) (TC 3.A.1.21) family.</text>
</comment>
<comment type="sequence caution" evidence="7">
    <conflict type="erroneous initiation">
        <sequence resource="EMBL-CDS" id="EHI14680"/>
    </conflict>
    <text>Truncated N-terminus.</text>
</comment>